<sequence length="675" mass="73359">MFKKLFGQMQRIGKALMLPVAILPAAGLLLAIGTAFQGEALQHYLPFIKNDIVQQIANMLTGAGGIIFDNLPIIFALGVAIGLAGGDGVAAIAAFVGFIILNKTMGAFLHVTPDKLSDPTNGYANVLGIPTLQTGVFGGIIIGALAAWCYNKFYNITLPSYLGFFAGKRFVPIMMATTSFILAFPMAIIWPTIQNGLNAFSEGLLDSNTGLAVFLFGFIKRLLIPFGLHHIFHAPFWFEFGSWKNAAGEIIRGDQRIFIEQIREGAHLTSGKFMQGEFPVMMFGLPAAALAIYQTAKPENKKVVAGLMISAALTSFLTGITEPLEFSFLFVAPFLFVIHAVLDGLSFLTLYLLNVHLGYTFSGGFIDYVLLGILPNKTAWWLVIPVGIIYAVIYYFVFRFLIVKFNYKTPGREDKKSSVTTTSASQLPFDVLKAMGGKENIKHLDACITRLRVEVNEKSKVDVAGLKSLGASGVLEVGNNMQAIFGPKSDQIKHDMAKIISGEITKPSETTIDEEVSDDPVHVEDIVETEIYAPGHGEIIPLSEVPDKVFSEKMMGDGIGFVPDSGEIVAPFDGTVKTIFPTKHAIGLESDSGVEVLIHIGIDTVKLNGEGFESLVNTDEPVTQGQPLMKIDLEYLKEHAPSIITPVIITNQEDKTLTIEDVKQVDPGKAIMTIK</sequence>
<keyword id="KW-1003">Cell membrane</keyword>
<keyword id="KW-0418">Kinase</keyword>
<keyword id="KW-0472">Membrane</keyword>
<keyword id="KW-0598">Phosphotransferase system</keyword>
<keyword id="KW-0762">Sugar transport</keyword>
<keyword id="KW-0808">Transferase</keyword>
<keyword id="KW-0812">Transmembrane</keyword>
<keyword id="KW-1133">Transmembrane helix</keyword>
<keyword id="KW-0813">Transport</keyword>
<feature type="chain" id="PRO_0000351404" description="PTS system glucose-specific EIICBA component">
    <location>
        <begin position="1"/>
        <end position="675"/>
    </location>
</feature>
<feature type="transmembrane region" description="Helical" evidence="4">
    <location>
        <begin position="16"/>
        <end position="36"/>
    </location>
</feature>
<feature type="transmembrane region" description="Helical" evidence="4">
    <location>
        <begin position="59"/>
        <end position="79"/>
    </location>
</feature>
<feature type="transmembrane region" description="Helical" evidence="4">
    <location>
        <begin position="81"/>
        <end position="101"/>
    </location>
</feature>
<feature type="transmembrane region" description="Helical" evidence="4">
    <location>
        <begin position="126"/>
        <end position="146"/>
    </location>
</feature>
<feature type="transmembrane region" description="Helical" evidence="4">
    <location>
        <begin position="170"/>
        <end position="190"/>
    </location>
</feature>
<feature type="transmembrane region" description="Helical" evidence="4">
    <location>
        <begin position="211"/>
        <end position="231"/>
    </location>
</feature>
<feature type="transmembrane region" description="Helical" evidence="4">
    <location>
        <begin position="273"/>
        <end position="293"/>
    </location>
</feature>
<feature type="transmembrane region" description="Helical" evidence="4">
    <location>
        <begin position="303"/>
        <end position="323"/>
    </location>
</feature>
<feature type="transmembrane region" description="Helical" evidence="4">
    <location>
        <begin position="328"/>
        <end position="348"/>
    </location>
</feature>
<feature type="transmembrane region" description="Helical" evidence="4">
    <location>
        <begin position="355"/>
        <end position="375"/>
    </location>
</feature>
<feature type="transmembrane region" description="Helical" evidence="4">
    <location>
        <begin position="378"/>
        <end position="398"/>
    </location>
</feature>
<feature type="domain" description="PTS EIIC type-1" evidence="4">
    <location>
        <begin position="3"/>
        <end position="414"/>
    </location>
</feature>
<feature type="domain" description="PTS EIIB type-1" evidence="3">
    <location>
        <begin position="425"/>
        <end position="506"/>
    </location>
</feature>
<feature type="domain" description="PTS EIIA type-1" evidence="2">
    <location>
        <begin position="547"/>
        <end position="651"/>
    </location>
</feature>
<feature type="active site" description="Phosphocysteine intermediate; for EIIB activity" evidence="3">
    <location>
        <position position="447"/>
    </location>
</feature>
<feature type="active site" description="Tele-phosphohistidine intermediate; for EIIA activity" evidence="2">
    <location>
        <position position="599"/>
    </location>
</feature>
<gene>
    <name type="primary">ptsG</name>
    <name type="ordered locus">SE_2102</name>
</gene>
<organism>
    <name type="scientific">Staphylococcus epidermidis (strain ATCC 12228 / FDA PCI 1200)</name>
    <dbReference type="NCBI Taxonomy" id="176280"/>
    <lineage>
        <taxon>Bacteria</taxon>
        <taxon>Bacillati</taxon>
        <taxon>Bacillota</taxon>
        <taxon>Bacilli</taxon>
        <taxon>Bacillales</taxon>
        <taxon>Staphylococcaceae</taxon>
        <taxon>Staphylococcus</taxon>
    </lineage>
</organism>
<comment type="function">
    <text evidence="1">The phosphoenolpyruvate-dependent sugar phosphotransferase system (sugar PTS), a major carbohydrate active transport system, catalyzes the phosphorylation of incoming sugar substrates concomitantly with their translocation across the cell membrane. This system is involved in glucose transport.</text>
</comment>
<comment type="catalytic activity">
    <reaction evidence="1">
        <text>N(pros)-phospho-L-histidyl-[protein] + D-glucose(out) = D-glucose 6-phosphate(in) + L-histidyl-[protein]</text>
        <dbReference type="Rhea" id="RHEA:33367"/>
        <dbReference type="Rhea" id="RHEA-COMP:9745"/>
        <dbReference type="Rhea" id="RHEA-COMP:9746"/>
        <dbReference type="ChEBI" id="CHEBI:4167"/>
        <dbReference type="ChEBI" id="CHEBI:29979"/>
        <dbReference type="ChEBI" id="CHEBI:61548"/>
        <dbReference type="ChEBI" id="CHEBI:64837"/>
        <dbReference type="EC" id="2.7.1.199"/>
    </reaction>
</comment>
<comment type="subcellular location">
    <subcellularLocation>
        <location evidence="4">Cell membrane</location>
        <topology evidence="4">Multi-pass membrane protein</topology>
    </subcellularLocation>
</comment>
<comment type="domain">
    <text evidence="4">The EIIC domain forms the PTS system translocation channel and contains the specific substrate-binding site.</text>
</comment>
<comment type="domain">
    <text evidence="3">The EIIB domain is phosphorylated by phospho-EIIA on a cysteinyl or histidyl residue, depending on the transported sugar. Then, it transfers the phosphoryl group to the sugar substrate concomitantly with the sugar uptake processed by the EIIC domain.</text>
</comment>
<comment type="domain">
    <text evidence="2">The EIIA domain is phosphorylated by phospho-HPr on a histidyl residue. Then, it transfers the phosphoryl group to the EIIB domain.</text>
</comment>
<accession>Q7CCJ4</accession>
<proteinExistence type="inferred from homology"/>
<dbReference type="EC" id="2.7.1.199" evidence="1"/>
<dbReference type="EMBL" id="AE015929">
    <property type="protein sequence ID" value="AAO05744.1"/>
    <property type="molecule type" value="Genomic_DNA"/>
</dbReference>
<dbReference type="RefSeq" id="NP_765657.1">
    <property type="nucleotide sequence ID" value="NC_004461.1"/>
</dbReference>
<dbReference type="RefSeq" id="WP_001832339.1">
    <property type="nucleotide sequence ID" value="NZ_WBME01000013.1"/>
</dbReference>
<dbReference type="SMR" id="Q7CCJ4"/>
<dbReference type="GeneID" id="50017816"/>
<dbReference type="KEGG" id="sep:SE_2102"/>
<dbReference type="PATRIC" id="fig|176280.10.peg.2053"/>
<dbReference type="eggNOG" id="COG1263">
    <property type="taxonomic scope" value="Bacteria"/>
</dbReference>
<dbReference type="eggNOG" id="COG1264">
    <property type="taxonomic scope" value="Bacteria"/>
</dbReference>
<dbReference type="eggNOG" id="COG2190">
    <property type="taxonomic scope" value="Bacteria"/>
</dbReference>
<dbReference type="HOGENOM" id="CLU_012312_1_1_9"/>
<dbReference type="OrthoDB" id="9764327at2"/>
<dbReference type="Proteomes" id="UP000001411">
    <property type="component" value="Chromosome"/>
</dbReference>
<dbReference type="GO" id="GO:0005886">
    <property type="term" value="C:plasma membrane"/>
    <property type="evidence" value="ECO:0007669"/>
    <property type="project" value="UniProtKB-SubCell"/>
</dbReference>
<dbReference type="GO" id="GO:0055056">
    <property type="term" value="F:D-glucose transmembrane transporter activity"/>
    <property type="evidence" value="ECO:0007669"/>
    <property type="project" value="InterPro"/>
</dbReference>
<dbReference type="GO" id="GO:0016301">
    <property type="term" value="F:kinase activity"/>
    <property type="evidence" value="ECO:0007669"/>
    <property type="project" value="UniProtKB-KW"/>
</dbReference>
<dbReference type="GO" id="GO:0008982">
    <property type="term" value="F:protein-N(PI)-phosphohistidine-sugar phosphotransferase activity"/>
    <property type="evidence" value="ECO:0007669"/>
    <property type="project" value="InterPro"/>
</dbReference>
<dbReference type="GO" id="GO:0090563">
    <property type="term" value="F:protein-phosphocysteine-sugar phosphotransferase activity"/>
    <property type="evidence" value="ECO:0007669"/>
    <property type="project" value="TreeGrafter"/>
</dbReference>
<dbReference type="GO" id="GO:1904659">
    <property type="term" value="P:D-glucose transmembrane transport"/>
    <property type="evidence" value="ECO:0007669"/>
    <property type="project" value="InterPro"/>
</dbReference>
<dbReference type="GO" id="GO:0009401">
    <property type="term" value="P:phosphoenolpyruvate-dependent sugar phosphotransferase system"/>
    <property type="evidence" value="ECO:0007669"/>
    <property type="project" value="UniProtKB-KW"/>
</dbReference>
<dbReference type="CDD" id="cd00212">
    <property type="entry name" value="PTS_IIB_glc"/>
    <property type="match status" value="1"/>
</dbReference>
<dbReference type="FunFam" id="2.70.70.10:FF:000001">
    <property type="entry name" value="PTS system glucose-specific IIA component"/>
    <property type="match status" value="1"/>
</dbReference>
<dbReference type="FunFam" id="3.30.1360.60:FF:000001">
    <property type="entry name" value="PTS system glucose-specific IIBC component PtsG"/>
    <property type="match status" value="1"/>
</dbReference>
<dbReference type="Gene3D" id="2.70.70.10">
    <property type="entry name" value="Glucose Permease (Domain IIA)"/>
    <property type="match status" value="1"/>
</dbReference>
<dbReference type="Gene3D" id="3.30.1360.60">
    <property type="entry name" value="Glucose permease domain IIB"/>
    <property type="match status" value="1"/>
</dbReference>
<dbReference type="InterPro" id="IPR011055">
    <property type="entry name" value="Dup_hybrid_motif"/>
</dbReference>
<dbReference type="InterPro" id="IPR036878">
    <property type="entry name" value="Glu_permease_IIB"/>
</dbReference>
<dbReference type="InterPro" id="IPR018113">
    <property type="entry name" value="PTrfase_EIIB_Cys"/>
</dbReference>
<dbReference type="InterPro" id="IPR001127">
    <property type="entry name" value="PTS_EIIA_1_perm"/>
</dbReference>
<dbReference type="InterPro" id="IPR003352">
    <property type="entry name" value="PTS_EIIC"/>
</dbReference>
<dbReference type="InterPro" id="IPR013013">
    <property type="entry name" value="PTS_EIIC_1"/>
</dbReference>
<dbReference type="InterPro" id="IPR050429">
    <property type="entry name" value="PTS_Glucose_EIICBA"/>
</dbReference>
<dbReference type="InterPro" id="IPR001996">
    <property type="entry name" value="PTS_IIB_1"/>
</dbReference>
<dbReference type="InterPro" id="IPR011299">
    <property type="entry name" value="PTS_IIBC_glc"/>
</dbReference>
<dbReference type="NCBIfam" id="TIGR00826">
    <property type="entry name" value="EIIB_glc"/>
    <property type="match status" value="1"/>
</dbReference>
<dbReference type="NCBIfam" id="TIGR00830">
    <property type="entry name" value="PTBA"/>
    <property type="match status" value="1"/>
</dbReference>
<dbReference type="NCBIfam" id="TIGR02002">
    <property type="entry name" value="PTS-II-BC-glcB"/>
    <property type="match status" value="1"/>
</dbReference>
<dbReference type="PANTHER" id="PTHR30009">
    <property type="entry name" value="CYTOCHROME C-TYPE SYNTHESIS PROTEIN AND PTS TRANSMEMBRANE COMPONENT"/>
    <property type="match status" value="1"/>
</dbReference>
<dbReference type="PANTHER" id="PTHR30009:SF20">
    <property type="entry name" value="PTS SYSTEM GLUCOSE-SPECIFIC EIICB COMPONENT-RELATED"/>
    <property type="match status" value="1"/>
</dbReference>
<dbReference type="Pfam" id="PF00358">
    <property type="entry name" value="PTS_EIIA_1"/>
    <property type="match status" value="1"/>
</dbReference>
<dbReference type="Pfam" id="PF00367">
    <property type="entry name" value="PTS_EIIB"/>
    <property type="match status" value="1"/>
</dbReference>
<dbReference type="Pfam" id="PF02378">
    <property type="entry name" value="PTS_EIIC"/>
    <property type="match status" value="1"/>
</dbReference>
<dbReference type="SUPFAM" id="SSF51261">
    <property type="entry name" value="Duplicated hybrid motif"/>
    <property type="match status" value="1"/>
</dbReference>
<dbReference type="SUPFAM" id="SSF55604">
    <property type="entry name" value="Glucose permease domain IIB"/>
    <property type="match status" value="1"/>
</dbReference>
<dbReference type="PROSITE" id="PS51093">
    <property type="entry name" value="PTS_EIIA_TYPE_1"/>
    <property type="match status" value="1"/>
</dbReference>
<dbReference type="PROSITE" id="PS00371">
    <property type="entry name" value="PTS_EIIA_TYPE_1_HIS"/>
    <property type="match status" value="1"/>
</dbReference>
<dbReference type="PROSITE" id="PS51098">
    <property type="entry name" value="PTS_EIIB_TYPE_1"/>
    <property type="match status" value="1"/>
</dbReference>
<dbReference type="PROSITE" id="PS01035">
    <property type="entry name" value="PTS_EIIB_TYPE_1_CYS"/>
    <property type="match status" value="1"/>
</dbReference>
<dbReference type="PROSITE" id="PS51103">
    <property type="entry name" value="PTS_EIIC_TYPE_1"/>
    <property type="match status" value="1"/>
</dbReference>
<name>PTG3C_STAES</name>
<protein>
    <recommendedName>
        <fullName evidence="1">PTS system glucose-specific EIICBA component</fullName>
        <ecNumber evidence="1">2.7.1.199</ecNumber>
    </recommendedName>
    <alternativeName>
        <fullName evidence="1">EIICBA-Glc</fullName>
        <shortName evidence="1">EII-Glc</shortName>
    </alternativeName>
    <alternativeName>
        <fullName evidence="5">EIICBA-Glc 1</fullName>
    </alternativeName>
    <domain>
        <recommendedName>
            <fullName evidence="1">Glucose permease IIC component</fullName>
        </recommendedName>
        <alternativeName>
            <fullName evidence="1">PTS system glucose-specific EIIC component</fullName>
        </alternativeName>
    </domain>
    <domain>
        <recommendedName>
            <fullName evidence="1">Glucose-specific phosphotransferase enzyme IIB component</fullName>
        </recommendedName>
        <alternativeName>
            <fullName evidence="1">PTS system glucose-specific EIIB component</fullName>
        </alternativeName>
    </domain>
    <domain>
        <recommendedName>
            <fullName evidence="1">Glucose-specific phosphotransferase enzyme IIA component</fullName>
        </recommendedName>
        <alternativeName>
            <fullName evidence="1">PTS system glucose-specific EIIA component</fullName>
        </alternativeName>
    </domain>
</protein>
<reference key="1">
    <citation type="journal article" date="2003" name="Mol. Microbiol.">
        <title>Genome-based analysis of virulence genes in a non-biofilm-forming Staphylococcus epidermidis strain (ATCC 12228).</title>
        <authorList>
            <person name="Zhang Y.-Q."/>
            <person name="Ren S.-X."/>
            <person name="Li H.-L."/>
            <person name="Wang Y.-X."/>
            <person name="Fu G."/>
            <person name="Yang J."/>
            <person name="Qin Z.-Q."/>
            <person name="Miao Y.-G."/>
            <person name="Wang W.-Y."/>
            <person name="Chen R.-S."/>
            <person name="Shen Y."/>
            <person name="Chen Z."/>
            <person name="Yuan Z.-H."/>
            <person name="Zhao G.-P."/>
            <person name="Qu D."/>
            <person name="Danchin A."/>
            <person name="Wen Y.-M."/>
        </authorList>
    </citation>
    <scope>NUCLEOTIDE SEQUENCE [LARGE SCALE GENOMIC DNA]</scope>
    <source>
        <strain>ATCC 12228 / FDA PCI 1200</strain>
    </source>
</reference>
<evidence type="ECO:0000250" key="1">
    <source>
        <dbReference type="UniProtKB" id="Q57071"/>
    </source>
</evidence>
<evidence type="ECO:0000255" key="2">
    <source>
        <dbReference type="PROSITE-ProRule" id="PRU00416"/>
    </source>
</evidence>
<evidence type="ECO:0000255" key="3">
    <source>
        <dbReference type="PROSITE-ProRule" id="PRU00421"/>
    </source>
</evidence>
<evidence type="ECO:0000255" key="4">
    <source>
        <dbReference type="PROSITE-ProRule" id="PRU00426"/>
    </source>
</evidence>
<evidence type="ECO:0000305" key="5"/>